<organism>
    <name type="scientific">Corynebacterium kroppenstedtii (strain DSM 44385 / JCM 11950 / CIP 105744 / CCUG 35717)</name>
    <dbReference type="NCBI Taxonomy" id="645127"/>
    <lineage>
        <taxon>Bacteria</taxon>
        <taxon>Bacillati</taxon>
        <taxon>Actinomycetota</taxon>
        <taxon>Actinomycetes</taxon>
        <taxon>Mycobacteriales</taxon>
        <taxon>Corynebacteriaceae</taxon>
        <taxon>Corynebacterium</taxon>
    </lineage>
</organism>
<feature type="chain" id="PRO_1000205820" description="Large ribosomal subunit protein bL34">
    <location>
        <begin position="1"/>
        <end position="47"/>
    </location>
</feature>
<feature type="region of interest" description="Disordered" evidence="2">
    <location>
        <begin position="1"/>
        <end position="47"/>
    </location>
</feature>
<feature type="compositionally biased region" description="Basic residues" evidence="2">
    <location>
        <begin position="1"/>
        <end position="22"/>
    </location>
</feature>
<feature type="compositionally biased region" description="Basic residues" evidence="2">
    <location>
        <begin position="36"/>
        <end position="47"/>
    </location>
</feature>
<evidence type="ECO:0000255" key="1">
    <source>
        <dbReference type="HAMAP-Rule" id="MF_00391"/>
    </source>
</evidence>
<evidence type="ECO:0000256" key="2">
    <source>
        <dbReference type="SAM" id="MobiDB-lite"/>
    </source>
</evidence>
<evidence type="ECO:0000305" key="3"/>
<protein>
    <recommendedName>
        <fullName evidence="1">Large ribosomal subunit protein bL34</fullName>
    </recommendedName>
    <alternativeName>
        <fullName evidence="3">50S ribosomal protein L34</fullName>
    </alternativeName>
</protein>
<keyword id="KW-1185">Reference proteome</keyword>
<keyword id="KW-0687">Ribonucleoprotein</keyword>
<keyword id="KW-0689">Ribosomal protein</keyword>
<proteinExistence type="inferred from homology"/>
<comment type="similarity">
    <text evidence="1">Belongs to the bacterial ribosomal protein bL34 family.</text>
</comment>
<sequence>MAKGKRTFQPNNRRRSRVHGFRSRMSTRAGRAIVSARRRKGRKSLTA</sequence>
<accession>C4LGJ8</accession>
<gene>
    <name evidence="1" type="primary">rpmH</name>
    <name type="ordered locus">ckrop_2121</name>
</gene>
<reference key="1">
    <citation type="journal article" date="2008" name="J. Biotechnol.">
        <title>Ultrafast pyrosequencing of Corynebacterium kroppenstedtii DSM44385 revealed insights into the physiology of a lipophilic corynebacterium that lacks mycolic acids.</title>
        <authorList>
            <person name="Tauch A."/>
            <person name="Schneider J."/>
            <person name="Szczepanowski R."/>
            <person name="Tilker A."/>
            <person name="Viehoever P."/>
            <person name="Gartemann K.-H."/>
            <person name="Arnold W."/>
            <person name="Blom J."/>
            <person name="Brinkrolf K."/>
            <person name="Brune I."/>
            <person name="Goetker S."/>
            <person name="Weisshaar B."/>
            <person name="Goesmann A."/>
            <person name="Droege M."/>
            <person name="Puehler A."/>
        </authorList>
    </citation>
    <scope>NUCLEOTIDE SEQUENCE [LARGE SCALE GENOMIC DNA]</scope>
    <source>
        <strain>DSM 44385 / JCM 11950 / CIP 105744 / CCUG 35717</strain>
    </source>
</reference>
<name>RL34_CORK4</name>
<dbReference type="EMBL" id="CP001620">
    <property type="protein sequence ID" value="ACR18817.1"/>
    <property type="molecule type" value="Genomic_DNA"/>
</dbReference>
<dbReference type="SMR" id="C4LGJ8"/>
<dbReference type="STRING" id="645127.ckrop_2121"/>
<dbReference type="KEGG" id="ckp:ckrop_2121"/>
<dbReference type="eggNOG" id="COG0230">
    <property type="taxonomic scope" value="Bacteria"/>
</dbReference>
<dbReference type="HOGENOM" id="CLU_129938_2_1_11"/>
<dbReference type="Proteomes" id="UP000001473">
    <property type="component" value="Chromosome"/>
</dbReference>
<dbReference type="GO" id="GO:1990904">
    <property type="term" value="C:ribonucleoprotein complex"/>
    <property type="evidence" value="ECO:0007669"/>
    <property type="project" value="UniProtKB-KW"/>
</dbReference>
<dbReference type="GO" id="GO:0005840">
    <property type="term" value="C:ribosome"/>
    <property type="evidence" value="ECO:0007669"/>
    <property type="project" value="UniProtKB-KW"/>
</dbReference>
<dbReference type="GO" id="GO:0003735">
    <property type="term" value="F:structural constituent of ribosome"/>
    <property type="evidence" value="ECO:0007669"/>
    <property type="project" value="InterPro"/>
</dbReference>
<dbReference type="GO" id="GO:0006412">
    <property type="term" value="P:translation"/>
    <property type="evidence" value="ECO:0007669"/>
    <property type="project" value="UniProtKB-UniRule"/>
</dbReference>
<dbReference type="FunFam" id="1.10.287.3980:FF:000001">
    <property type="entry name" value="Mitochondrial ribosomal protein L34"/>
    <property type="match status" value="1"/>
</dbReference>
<dbReference type="Gene3D" id="1.10.287.3980">
    <property type="match status" value="1"/>
</dbReference>
<dbReference type="HAMAP" id="MF_00391">
    <property type="entry name" value="Ribosomal_bL34"/>
    <property type="match status" value="1"/>
</dbReference>
<dbReference type="InterPro" id="IPR000271">
    <property type="entry name" value="Ribosomal_bL34"/>
</dbReference>
<dbReference type="InterPro" id="IPR020939">
    <property type="entry name" value="Ribosomal_bL34_CS"/>
</dbReference>
<dbReference type="NCBIfam" id="TIGR01030">
    <property type="entry name" value="rpmH_bact"/>
    <property type="match status" value="1"/>
</dbReference>
<dbReference type="PANTHER" id="PTHR14503:SF4">
    <property type="entry name" value="LARGE RIBOSOMAL SUBUNIT PROTEIN BL34M"/>
    <property type="match status" value="1"/>
</dbReference>
<dbReference type="PANTHER" id="PTHR14503">
    <property type="entry name" value="MITOCHONDRIAL RIBOSOMAL PROTEIN 34 FAMILY MEMBER"/>
    <property type="match status" value="1"/>
</dbReference>
<dbReference type="Pfam" id="PF00468">
    <property type="entry name" value="Ribosomal_L34"/>
    <property type="match status" value="1"/>
</dbReference>
<dbReference type="PROSITE" id="PS00784">
    <property type="entry name" value="RIBOSOMAL_L34"/>
    <property type="match status" value="1"/>
</dbReference>